<proteinExistence type="evidence at protein level"/>
<feature type="chain" id="PRO_0000191195" description="Chaperone protein ClpB">
    <location>
        <begin position="1"/>
        <end position="854"/>
    </location>
</feature>
<feature type="domain" description="Clp R" evidence="1">
    <location>
        <begin position="3"/>
        <end position="147"/>
    </location>
</feature>
<feature type="region of interest" description="Repeat 1" evidence="1">
    <location>
        <begin position="6"/>
        <end position="71"/>
    </location>
</feature>
<feature type="region of interest" description="Repeat 2" evidence="1">
    <location>
        <begin position="83"/>
        <end position="147"/>
    </location>
</feature>
<feature type="region of interest" description="NBD1">
    <location>
        <begin position="151"/>
        <end position="331"/>
    </location>
</feature>
<feature type="region of interest" description="Linker">
    <location>
        <begin position="332"/>
        <end position="535"/>
    </location>
</feature>
<feature type="region of interest" description="NBD2">
    <location>
        <begin position="545"/>
        <end position="756"/>
    </location>
</feature>
<feature type="region of interest" description="C-terminal">
    <location>
        <begin position="757"/>
        <end position="854"/>
    </location>
</feature>
<feature type="coiled-coil region">
    <location>
        <begin position="382"/>
        <end position="516"/>
    </location>
</feature>
<feature type="binding site">
    <location>
        <begin position="198"/>
        <end position="205"/>
    </location>
    <ligand>
        <name>ATP</name>
        <dbReference type="ChEBI" id="CHEBI:30616"/>
        <label>1</label>
    </ligand>
</feature>
<feature type="binding site">
    <location>
        <begin position="595"/>
        <end position="602"/>
    </location>
    <ligand>
        <name>ATP</name>
        <dbReference type="ChEBI" id="CHEBI:30616"/>
        <label>2</label>
    </ligand>
</feature>
<feature type="mutagenesis site" description="Great decrease in chaperone activity. Retains ATPase activity and oligomerization; when associated with C-475." evidence="4">
    <original>G</original>
    <variation>C</variation>
    <location>
        <position position="167"/>
    </location>
</feature>
<feature type="mutagenesis site" description="Loss of ability to bind ATP. Residual ATPase activity." evidence="3">
    <original>KT</original>
    <variation>AA</variation>
    <location>
        <begin position="204"/>
        <end position="205"/>
    </location>
</feature>
<feature type="mutagenesis site" description="No effect on ability to bind ATP. Decrease in ATPase activity." evidence="3">
    <original>D</original>
    <variation>N</variation>
    <location>
        <position position="270"/>
    </location>
</feature>
<feature type="mutagenesis site" description="No effect on ability to bind ATP. Increase in ATPase activity." evidence="3">
    <original>E</original>
    <variation>Q</variation>
    <location>
        <position position="271"/>
    </location>
</feature>
<feature type="mutagenesis site" description="Great decrease in chaperone activity. Retains ATPase activity and oligomerization; when associated with C-467." evidence="4">
    <original>V</original>
    <variation>C</variation>
    <location>
        <position position="350"/>
    </location>
</feature>
<feature type="mutagenesis site" description="Great decrease in chaperone activity. Retains ATPase activity and oligomerization; when associated with C-464." evidence="4">
    <original>G</original>
    <variation>C</variation>
    <location>
        <position position="353"/>
    </location>
</feature>
<feature type="mutagenesis site" description="Great decrease in chaperone activity. Retains ATPase activity and oligomerization; when associated with C-520." evidence="4">
    <original>R</original>
    <variation>C</variation>
    <location>
        <position position="355"/>
    </location>
</feature>
<feature type="mutagenesis site" description="Great decrease in chaperone activity. Retains ATPase activity and oligomerization." evidence="4">
    <original>L</original>
    <variation>A</variation>
    <location>
        <position position="396"/>
    </location>
</feature>
<feature type="mutagenesis site" description="Great decrease in chaperone activity. Retains ATPase activity and oligomerization." evidence="4">
    <original>L</original>
    <variation>A</variation>
    <location>
        <position position="460"/>
    </location>
</feature>
<feature type="mutagenesis site" description="Great decrease in chaperone activity. Retains ATPase activity and oligomerization; when associated with C-353." evidence="4">
    <original>R</original>
    <variation>C</variation>
    <location>
        <position position="464"/>
    </location>
</feature>
<feature type="mutagenesis site" description="Great decrease in chaperone activity. Retains ATPase activity and oligomerization; when associated with C-350." evidence="4">
    <original>Q</original>
    <variation>C</variation>
    <location>
        <position position="467"/>
    </location>
</feature>
<feature type="mutagenesis site" description="Great decrease in chaperone activity. Retains ATPase activity and oligomerization; when associated with C-167." evidence="4">
    <original>R</original>
    <variation>C</variation>
    <location>
        <position position="475"/>
    </location>
</feature>
<feature type="mutagenesis site" description="Great decrease in chaperone activity. Retains ATPase activity and oligomerization; when associated with C-355." evidence="4">
    <original>E</original>
    <variation>C</variation>
    <location>
        <position position="520"/>
    </location>
</feature>
<feature type="mutagenesis site" description="Loss of ability to bind ATP. Residual ATPase activity." evidence="3">
    <original>KT</original>
    <variation>AA</variation>
    <location>
        <begin position="601"/>
        <end position="602"/>
    </location>
</feature>
<feature type="mutagenesis site" description="Decrease in ATPase activity." evidence="3">
    <original>D</original>
    <variation>N</variation>
    <location>
        <position position="667"/>
    </location>
</feature>
<feature type="mutagenesis site" description="Decrease in ATPase activity." evidence="3">
    <original>E</original>
    <variation>Q</variation>
    <location>
        <position position="668"/>
    </location>
</feature>
<feature type="sequence conflict" description="In Ref. 1; BAA81745/BAA96085." evidence="5" ref="1">
    <original>A</original>
    <variation>G</variation>
    <location>
        <position position="96"/>
    </location>
</feature>
<feature type="helix" evidence="6">
    <location>
        <begin position="8"/>
        <end position="23"/>
    </location>
</feature>
<feature type="strand" evidence="6">
    <location>
        <begin position="27"/>
        <end position="29"/>
    </location>
</feature>
<feature type="helix" evidence="6">
    <location>
        <begin position="31"/>
        <end position="38"/>
    </location>
</feature>
<feature type="strand" evidence="6">
    <location>
        <begin position="41"/>
        <end position="44"/>
    </location>
</feature>
<feature type="helix" evidence="6">
    <location>
        <begin position="45"/>
        <end position="51"/>
    </location>
</feature>
<feature type="helix" evidence="6">
    <location>
        <begin position="57"/>
        <end position="69"/>
    </location>
</feature>
<feature type="helix" evidence="6">
    <location>
        <begin position="76"/>
        <end position="78"/>
    </location>
</feature>
<feature type="helix" evidence="6">
    <location>
        <begin position="85"/>
        <end position="99"/>
    </location>
</feature>
<feature type="turn" evidence="6">
    <location>
        <begin position="100"/>
        <end position="102"/>
    </location>
</feature>
<feature type="helix" evidence="6">
    <location>
        <begin position="108"/>
        <end position="118"/>
    </location>
</feature>
<feature type="helix" evidence="6">
    <location>
        <begin position="125"/>
        <end position="132"/>
    </location>
</feature>
<feature type="helix" evidence="9">
    <location>
        <begin position="152"/>
        <end position="155"/>
    </location>
</feature>
<feature type="strand" evidence="9">
    <location>
        <begin position="156"/>
        <end position="159"/>
    </location>
</feature>
<feature type="helix" evidence="9">
    <location>
        <begin position="160"/>
        <end position="165"/>
    </location>
</feature>
<feature type="helix" evidence="9">
    <location>
        <begin position="176"/>
        <end position="186"/>
    </location>
</feature>
<feature type="strand" evidence="9">
    <location>
        <begin position="188"/>
        <end position="191"/>
    </location>
</feature>
<feature type="strand" evidence="9">
    <location>
        <begin position="193"/>
        <end position="197"/>
    </location>
</feature>
<feature type="helix" evidence="9">
    <location>
        <begin position="204"/>
        <end position="217"/>
    </location>
</feature>
<feature type="helix" evidence="9">
    <location>
        <begin position="222"/>
        <end position="224"/>
    </location>
</feature>
<feature type="strand" evidence="9">
    <location>
        <begin position="228"/>
        <end position="232"/>
    </location>
</feature>
<feature type="helix" evidence="9">
    <location>
        <begin position="234"/>
        <end position="238"/>
    </location>
</feature>
<feature type="helix" evidence="9">
    <location>
        <begin position="246"/>
        <end position="260"/>
    </location>
</feature>
<feature type="turn" evidence="9">
    <location>
        <begin position="261"/>
        <end position="263"/>
    </location>
</feature>
<feature type="strand" evidence="9">
    <location>
        <begin position="264"/>
        <end position="271"/>
    </location>
</feature>
<feature type="helix" evidence="9">
    <location>
        <begin position="272"/>
        <end position="274"/>
    </location>
</feature>
<feature type="helix" evidence="9">
    <location>
        <begin position="288"/>
        <end position="296"/>
    </location>
</feature>
<feature type="strand" evidence="9">
    <location>
        <begin position="301"/>
        <end position="306"/>
    </location>
</feature>
<feature type="helix" evidence="9">
    <location>
        <begin position="308"/>
        <end position="315"/>
    </location>
</feature>
<feature type="helix" evidence="9">
    <location>
        <begin position="318"/>
        <end position="321"/>
    </location>
</feature>
<feature type="strand" evidence="9">
    <location>
        <begin position="324"/>
        <end position="328"/>
    </location>
</feature>
<feature type="helix" evidence="9">
    <location>
        <begin position="334"/>
        <end position="352"/>
    </location>
</feature>
<feature type="helix" evidence="9">
    <location>
        <begin position="358"/>
        <end position="371"/>
    </location>
</feature>
<feature type="helix" evidence="9">
    <location>
        <begin position="379"/>
        <end position="397"/>
    </location>
</feature>
<feature type="helix" evidence="9">
    <location>
        <begin position="401"/>
        <end position="419"/>
    </location>
</feature>
<feature type="helix" evidence="9">
    <location>
        <begin position="429"/>
        <end position="483"/>
    </location>
</feature>
<feature type="helix" evidence="9">
    <location>
        <begin position="486"/>
        <end position="493"/>
    </location>
</feature>
<feature type="helix" evidence="9">
    <location>
        <begin position="496"/>
        <end position="512"/>
    </location>
</feature>
<feature type="strand" evidence="6">
    <location>
        <begin position="519"/>
        <end position="521"/>
    </location>
</feature>
<feature type="helix" evidence="13">
    <location>
        <begin position="523"/>
        <end position="534"/>
    </location>
</feature>
<feature type="helix" evidence="13">
    <location>
        <begin position="538"/>
        <end position="541"/>
    </location>
</feature>
<feature type="helix" evidence="13">
    <location>
        <begin position="543"/>
        <end position="549"/>
    </location>
</feature>
<feature type="helix" evidence="13">
    <location>
        <begin position="552"/>
        <end position="557"/>
    </location>
</feature>
<feature type="helix" evidence="13">
    <location>
        <begin position="564"/>
        <end position="578"/>
    </location>
</feature>
<feature type="strand" evidence="11">
    <location>
        <begin position="584"/>
        <end position="586"/>
    </location>
</feature>
<feature type="strand" evidence="13">
    <location>
        <begin position="588"/>
        <end position="595"/>
    </location>
</feature>
<feature type="strand" evidence="8">
    <location>
        <begin position="597"/>
        <end position="600"/>
    </location>
</feature>
<feature type="helix" evidence="13">
    <location>
        <begin position="601"/>
        <end position="613"/>
    </location>
</feature>
<feature type="helix" evidence="13">
    <location>
        <begin position="616"/>
        <end position="618"/>
    </location>
</feature>
<feature type="strand" evidence="13">
    <location>
        <begin position="619"/>
        <end position="623"/>
    </location>
</feature>
<feature type="helix" evidence="13">
    <location>
        <begin position="624"/>
        <end position="626"/>
    </location>
</feature>
<feature type="helix" evidence="13">
    <location>
        <begin position="632"/>
        <end position="637"/>
    </location>
</feature>
<feature type="strand" evidence="7">
    <location>
        <begin position="641"/>
        <end position="643"/>
    </location>
</feature>
<feature type="turn" evidence="13">
    <location>
        <begin position="644"/>
        <end position="648"/>
    </location>
</feature>
<feature type="helix" evidence="13">
    <location>
        <begin position="651"/>
        <end position="658"/>
    </location>
</feature>
<feature type="strand" evidence="13">
    <location>
        <begin position="663"/>
        <end position="668"/>
    </location>
</feature>
<feature type="helix" evidence="13">
    <location>
        <begin position="669"/>
        <end position="671"/>
    </location>
</feature>
<feature type="helix" evidence="13">
    <location>
        <begin position="674"/>
        <end position="686"/>
    </location>
</feature>
<feature type="strand" evidence="13">
    <location>
        <begin position="687"/>
        <end position="690"/>
    </location>
</feature>
<feature type="strand" evidence="10">
    <location>
        <begin position="692"/>
        <end position="694"/>
    </location>
</feature>
<feature type="strand" evidence="13">
    <location>
        <begin position="696"/>
        <end position="698"/>
    </location>
</feature>
<feature type="strand" evidence="13">
    <location>
        <begin position="703"/>
        <end position="707"/>
    </location>
</feature>
<feature type="helix" evidence="13">
    <location>
        <begin position="712"/>
        <end position="721"/>
    </location>
</feature>
<feature type="helix" evidence="13">
    <location>
        <begin position="725"/>
        <end position="739"/>
    </location>
</feature>
<feature type="helix" evidence="13">
    <location>
        <begin position="742"/>
        <end position="745"/>
    </location>
</feature>
<feature type="strand" evidence="13">
    <location>
        <begin position="748"/>
        <end position="753"/>
    </location>
</feature>
<feature type="helix" evidence="13">
    <location>
        <begin position="759"/>
        <end position="769"/>
    </location>
</feature>
<feature type="helix" evidence="13">
    <location>
        <begin position="771"/>
        <end position="779"/>
    </location>
</feature>
<feature type="strand" evidence="13">
    <location>
        <begin position="783"/>
        <end position="786"/>
    </location>
</feature>
<feature type="helix" evidence="13">
    <location>
        <begin position="788"/>
        <end position="798"/>
    </location>
</feature>
<feature type="turn" evidence="13">
    <location>
        <begin position="801"/>
        <end position="803"/>
    </location>
</feature>
<feature type="turn" evidence="13">
    <location>
        <begin position="805"/>
        <end position="807"/>
    </location>
</feature>
<feature type="helix" evidence="13">
    <location>
        <begin position="808"/>
        <end position="815"/>
    </location>
</feature>
<feature type="helix" evidence="13">
    <location>
        <begin position="817"/>
        <end position="825"/>
    </location>
</feature>
<feature type="strand" evidence="12">
    <location>
        <begin position="827"/>
        <end position="829"/>
    </location>
</feature>
<feature type="strand" evidence="13">
    <location>
        <begin position="834"/>
        <end position="839"/>
    </location>
</feature>
<feature type="strand" evidence="13">
    <location>
        <begin position="841"/>
        <end position="847"/>
    </location>
</feature>
<sequence length="854" mass="96254">MNLERWTQAAREALAQAQVLAQRMKHQAIDLPHLWAVLLKDERSLAWRLLEKAGADPKALKELQERELARLPKVEGAEVGQYLTSRLSGALNRAEALMEELKDRYVAVDTLVLALAEATPGLPGLEALKGALKELRGGRTVQTEHAESTYNALEQYGIDLTRLAAEGKLDPVIGRDEEIRRVIQILLRRTKNNPVLIGEPGVGKTAIVEGLAQRIVKGDVPEGLKGKRIVSLQMGSLLAGAKYRGEFEERLKAVIQEVVQSQGEVILFIDELHTVVGAGKAEGAVDAGNMLKPALARGELRLIGATTLDEYREIEKDPALERRFQPVYVDEPTVEETISILRGLKEKYEVHHGVRISDSAIIAAATLSHRYITERRLPDKAIDLIDEAAARLRMALESAPEEIDALERKKLQLEIEREALKKEKDPDSQERLKAIEAEIAKLTEEIAKLRAEWEREREILRKLREAQHRLDEVRREIELAERQYDLNRAAELRYGELPKLEAEVEALSEKLRGARFVRLEVTEEDIAEIVSRWTGIPVSKLLEGEREKLLRLEEELHKRVVGQDEAIRAVADAIRRARAGLKDPNRPIGSFLFLGPTGVGKTELAKTLAATLFDTEEAMIRIDMTEYMEKHAVSRLIGAPPGYVGYEEGGQLTEAVRRRPYSVILFDEIEKAHPDVFNILLQILDDGRLTDSHGRTVDFRNTVIILTSNLGSPLILEGLQKGWPYERIRDEVFKVLQQHFRPEFLNRLDEIVVFRPLTKEQIRQIVEIQLSYLRARLAEKRISLELTEAAKDFLAERGYDPVFGARPLRRVIQRELETPLAQKILAGEVKEGDRVQVDVGPAGLVFAVPARVEA</sequence>
<keyword id="KW-0002">3D-structure</keyword>
<keyword id="KW-0067">ATP-binding</keyword>
<keyword id="KW-0143">Chaperone</keyword>
<keyword id="KW-0175">Coiled coil</keyword>
<keyword id="KW-0963">Cytoplasm</keyword>
<keyword id="KW-0547">Nucleotide-binding</keyword>
<keyword id="KW-1185">Reference proteome</keyword>
<keyword id="KW-0677">Repeat</keyword>
<keyword id="KW-0346">Stress response</keyword>
<accession>Q9RA63</accession>
<accession>P74942</accession>
<accession>Q5SI87</accession>
<comment type="function">
    <text evidence="2">Part of a stress-induced multi-chaperone system, it is involved in the recovery of the cell from heat-induced damage, in cooperation with DnaK, DnaJ and GrpE. Acts before DnaK, in the processing of protein aggregates. Protein binding stimulates the ATPase activity; ATP hydrolysis unfolds the denatured protein aggregates, which probably helps expose new hydrophobic binding sites on the surface of ClpB-bound aggregates, contributing to the solubilization and refolding of denatured protein aggregates by DnaK.</text>
</comment>
<comment type="subunit">
    <text evidence="3 4">Homohexamer. The oligomerization is ATP-dependent.</text>
</comment>
<comment type="interaction">
    <interactant intactId="EBI-7698530">
        <id>Q9RA63</id>
    </interactant>
    <interactant intactId="EBI-7698530">
        <id>Q9RA63</id>
        <label>clpB</label>
    </interactant>
    <organismsDiffer>false</organismsDiffer>
    <experiments>9</experiments>
</comment>
<comment type="interaction">
    <interactant intactId="EBI-7698530">
        <id>Q9RA63</id>
    </interactant>
    <interactant intactId="EBI-7234047">
        <id>P02668</id>
        <label>CSN3</label>
    </interactant>
    <organismsDiffer>true</organismsDiffer>
    <experiments>3</experiments>
</comment>
<comment type="subcellular location">
    <subcellularLocation>
        <location evidence="5">Cytoplasm</location>
    </subcellularLocation>
</comment>
<comment type="domain">
    <text>The Clp repeat (R) domain probably functions as a substrate-discriminating domain, recruiting aggregated proteins to the ClpB hexamer and/or stabilizing bound proteins. The NBD2 domain is responsible for oligomerization, whereas the NBD1 domain stabilizes the hexamer probably in an ATP-dependent manner. The movement of the coiled-coil domain is essential for ClpB ability to rescue proteins from an aggregated state, probably by pulling apart large aggregated proteins, which are bound between the coiled-coils motifs of adjacent ClpB subunits in the functional hexamer.</text>
</comment>
<comment type="similarity">
    <text evidence="5">Belongs to the ClpA/ClpB family.</text>
</comment>
<reference key="1">
    <citation type="journal article" date="1999" name="Proc. Natl. Acad. Sci. U.S.A.">
        <title>Heat-inactivated proteins are rescued by the DnaK/J-GrpE set and ClpB chaperones.</title>
        <authorList>
            <person name="Motohashi K."/>
            <person name="Watanabe Y.H."/>
            <person name="Yohda M."/>
            <person name="Yoshida M."/>
        </authorList>
    </citation>
    <scope>NUCLEOTIDE SEQUENCE [GENOMIC DNA]</scope>
    <scope>FUNCTION</scope>
</reference>
<reference key="2">
    <citation type="submission" date="2004-11" db="EMBL/GenBank/DDBJ databases">
        <title>Complete genome sequence of Thermus thermophilus HB8.</title>
        <authorList>
            <person name="Masui R."/>
            <person name="Kurokawa K."/>
            <person name="Nakagawa N."/>
            <person name="Tokunaga F."/>
            <person name="Koyama Y."/>
            <person name="Shibata T."/>
            <person name="Oshima T."/>
            <person name="Yokoyama S."/>
            <person name="Yasunaga T."/>
            <person name="Kuramitsu S."/>
        </authorList>
    </citation>
    <scope>NUCLEOTIDE SEQUENCE [LARGE SCALE GENOMIC DNA]</scope>
    <source>
        <strain>ATCC 27634 / DSM 579 / HB8</strain>
    </source>
</reference>
<reference key="3">
    <citation type="journal article" date="1999" name="J. Mol. Biol.">
        <title>The functional cycle and regulation of the Thermus thermophilus DnaK chaperone system.</title>
        <authorList>
            <person name="Klostermeier D."/>
            <person name="Seidel R."/>
            <person name="Reinstein J."/>
        </authorList>
    </citation>
    <scope>NUCLEOTIDE SEQUENCE [GENOMIC DNA] OF 1-508</scope>
</reference>
<reference key="4">
    <citation type="journal article" date="2000" name="J. Biol. Chem.">
        <title>Heat-inactivated proteins managed by DnaKJ-GrpE-ClpB chaperones are released as a chaperonin-recognizable non-native form.</title>
        <authorList>
            <person name="Watanabe Y.H."/>
            <person name="Motohashi K."/>
            <person name="Taguchi H."/>
            <person name="Yoshida M."/>
        </authorList>
    </citation>
    <scope>INTERACTION WITH THE DNAK-DNAJ-GRPE CHAPERONE SYSTEM</scope>
</reference>
<reference key="5">
    <citation type="journal article" date="2001" name="J. Mol. Biol.">
        <title>The chaperone function of ClpB from Thermus thermophilus depends on allosteric interactions of its two ATP-binding sites.</title>
        <authorList>
            <person name="Schlee S."/>
            <person name="Groemping Y."/>
            <person name="Herde P."/>
            <person name="Seidel R."/>
            <person name="Reinstein J."/>
        </authorList>
    </citation>
    <scope>PRELIMINARY CHARACTERIZATION OF SUBUNIT</scope>
</reference>
<reference key="6">
    <citation type="journal article" date="2002" name="J. Biol. Chem.">
        <title>Roles of the two ATP binding sites of ClpB from Thermus thermophilus.</title>
        <authorList>
            <person name="Watanabe Y.H."/>
            <person name="Motohashi K."/>
            <person name="Yoshida M."/>
        </authorList>
    </citation>
    <scope>SUBUNIT</scope>
    <scope>MUTAGENESIS OF 204-LYS-THR-205; ASP-270; GLU-271; 601-LYS-THR-602; ASP-667 AND GLU-668</scope>
</reference>
<reference key="7">
    <citation type="journal article" date="2004" name="J. Mol. Biol.">
        <title>A chaperone network for the resolubilization of protein aggregates: direct interaction of ClpB and DnaK.</title>
        <authorList>
            <person name="Schlee S."/>
            <person name="Beinker P."/>
            <person name="Akhrymuk A."/>
            <person name="Reinstein J."/>
        </authorList>
    </citation>
    <scope>INTERACTION WITH DNAK</scope>
</reference>
<reference key="8">
    <citation type="journal article" date="2003" name="Acta Crystallogr. D">
        <title>Crystallization and preliminary X-ray crystallographic analysis of the Hsp100 protein clpB from Thermus thermophilus.</title>
        <authorList>
            <person name="Lee S."/>
            <person name="Hisayoshi M."/>
            <person name="Yoshida M."/>
            <person name="Tsai F.T.F."/>
        </authorList>
    </citation>
    <scope>CRYSTALLIZATION</scope>
</reference>
<reference key="9">
    <citation type="journal article" date="2003" name="Cell">
        <title>The structure of ClpB: a molecular chaperone that rescues proteins from an aggregated state.</title>
        <authorList>
            <person name="Lee S."/>
            <person name="Sowa M.E."/>
            <person name="Watanabe Y.H."/>
            <person name="Sigler P.B."/>
            <person name="Chiu W."/>
            <person name="Yoshida M."/>
            <person name="Tsai F.T.F."/>
        </authorList>
    </citation>
    <scope>X-RAY CRYSTALLOGRAPHY (3.0 ANGSTROMS) IN COMPLEX WITH AMPPNP</scope>
    <scope>MUTAGENESIS OF GLY-167; VAL-350; GLY-353; ARG-355; LEU-396; LEU-460; ARG-464; GLN-467; ARG-475 AND GLU-520</scope>
</reference>
<protein>
    <recommendedName>
        <fullName>Chaperone protein ClpB</fullName>
    </recommendedName>
</protein>
<dbReference type="EMBL" id="AB012390">
    <property type="protein sequence ID" value="BAA81745.1"/>
    <property type="molecule type" value="Genomic_DNA"/>
</dbReference>
<dbReference type="EMBL" id="AB032368">
    <property type="protein sequence ID" value="BAA96085.1"/>
    <property type="molecule type" value="Genomic_DNA"/>
</dbReference>
<dbReference type="EMBL" id="AP008226">
    <property type="protein sequence ID" value="BAD71310.1"/>
    <property type="molecule type" value="Genomic_DNA"/>
</dbReference>
<dbReference type="EMBL" id="Y07826">
    <property type="protein sequence ID" value="CAA69163.2"/>
    <property type="molecule type" value="Genomic_DNA"/>
</dbReference>
<dbReference type="RefSeq" id="WP_011228712.1">
    <property type="nucleotide sequence ID" value="NC_006461.1"/>
</dbReference>
<dbReference type="RefSeq" id="YP_144753.1">
    <property type="nucleotide sequence ID" value="NC_006461.1"/>
</dbReference>
<dbReference type="PDB" id="1QVR">
    <property type="method" value="X-ray"/>
    <property type="resolution" value="3.00 A"/>
    <property type="chains" value="A/B/C=1-854"/>
</dbReference>
<dbReference type="PDB" id="4FCT">
    <property type="method" value="X-ray"/>
    <property type="resolution" value="4.00 A"/>
    <property type="chains" value="A=545-852"/>
</dbReference>
<dbReference type="PDB" id="4FCV">
    <property type="method" value="X-ray"/>
    <property type="resolution" value="3.40 A"/>
    <property type="chains" value="A/B/C=544-852"/>
</dbReference>
<dbReference type="PDB" id="4FCW">
    <property type="method" value="X-ray"/>
    <property type="resolution" value="2.35 A"/>
    <property type="chains" value="A/C/F=544-852"/>
</dbReference>
<dbReference type="PDB" id="4FD2">
    <property type="method" value="X-ray"/>
    <property type="resolution" value="3.00 A"/>
    <property type="chains" value="A/B/D=545-852"/>
</dbReference>
<dbReference type="PDB" id="4HSE">
    <property type="method" value="X-ray"/>
    <property type="resolution" value="2.20 A"/>
    <property type="chains" value="A=142-534"/>
</dbReference>
<dbReference type="PDB" id="4LJ4">
    <property type="method" value="X-ray"/>
    <property type="resolution" value="2.80 A"/>
    <property type="chains" value="A=520-854"/>
</dbReference>
<dbReference type="PDB" id="4LJ5">
    <property type="method" value="X-ray"/>
    <property type="resolution" value="2.40 A"/>
    <property type="chains" value="A=520-854"/>
</dbReference>
<dbReference type="PDB" id="4LJ6">
    <property type="method" value="X-ray"/>
    <property type="resolution" value="1.90 A"/>
    <property type="chains" value="A=520-854"/>
</dbReference>
<dbReference type="PDB" id="4LJ7">
    <property type="method" value="X-ray"/>
    <property type="resolution" value="2.80 A"/>
    <property type="chains" value="A/B/C=520-854"/>
</dbReference>
<dbReference type="PDB" id="4LJ8">
    <property type="method" value="X-ray"/>
    <property type="resolution" value="2.10 A"/>
    <property type="chains" value="A=520-854"/>
</dbReference>
<dbReference type="PDB" id="4LJ9">
    <property type="method" value="X-ray"/>
    <property type="resolution" value="1.70 A"/>
    <property type="chains" value="A=520-854"/>
</dbReference>
<dbReference type="PDB" id="4LJA">
    <property type="method" value="X-ray"/>
    <property type="resolution" value="2.00 A"/>
    <property type="chains" value="A=520-854"/>
</dbReference>
<dbReference type="PDBsum" id="1QVR"/>
<dbReference type="PDBsum" id="4FCT"/>
<dbReference type="PDBsum" id="4FCV"/>
<dbReference type="PDBsum" id="4FCW"/>
<dbReference type="PDBsum" id="4FD2"/>
<dbReference type="PDBsum" id="4HSE"/>
<dbReference type="PDBsum" id="4LJ4"/>
<dbReference type="PDBsum" id="4LJ5"/>
<dbReference type="PDBsum" id="4LJ6"/>
<dbReference type="PDBsum" id="4LJ7"/>
<dbReference type="PDBsum" id="4LJ8"/>
<dbReference type="PDBsum" id="4LJ9"/>
<dbReference type="PDBsum" id="4LJA"/>
<dbReference type="SMR" id="Q9RA63"/>
<dbReference type="DIP" id="DIP-41758N"/>
<dbReference type="IntAct" id="Q9RA63">
    <property type="interactions" value="1"/>
</dbReference>
<dbReference type="MINT" id="Q9RA63"/>
<dbReference type="DrugBank" id="DB04395">
    <property type="generic name" value="Phosphoaminophosphonic Acid-Adenylate Ester"/>
</dbReference>
<dbReference type="EnsemblBacteria" id="BAD71310">
    <property type="protein sequence ID" value="BAD71310"/>
    <property type="gene ID" value="BAD71310"/>
</dbReference>
<dbReference type="GeneID" id="3167975"/>
<dbReference type="KEGG" id="ttj:TTHA1487"/>
<dbReference type="PATRIC" id="fig|300852.9.peg.1462"/>
<dbReference type="eggNOG" id="COG0542">
    <property type="taxonomic scope" value="Bacteria"/>
</dbReference>
<dbReference type="HOGENOM" id="CLU_005070_4_0_0"/>
<dbReference type="PhylomeDB" id="Q9RA63"/>
<dbReference type="BRENDA" id="3.6.4.10">
    <property type="organism ID" value="2305"/>
</dbReference>
<dbReference type="EvolutionaryTrace" id="Q9RA63"/>
<dbReference type="Proteomes" id="UP000000532">
    <property type="component" value="Chromosome"/>
</dbReference>
<dbReference type="GO" id="GO:0005737">
    <property type="term" value="C:cytoplasm"/>
    <property type="evidence" value="ECO:0007669"/>
    <property type="project" value="UniProtKB-SubCell"/>
</dbReference>
<dbReference type="GO" id="GO:0005524">
    <property type="term" value="F:ATP binding"/>
    <property type="evidence" value="ECO:0007669"/>
    <property type="project" value="UniProtKB-KW"/>
</dbReference>
<dbReference type="GO" id="GO:0016887">
    <property type="term" value="F:ATP hydrolysis activity"/>
    <property type="evidence" value="ECO:0007669"/>
    <property type="project" value="InterPro"/>
</dbReference>
<dbReference type="GO" id="GO:0042802">
    <property type="term" value="F:identical protein binding"/>
    <property type="evidence" value="ECO:0000353"/>
    <property type="project" value="IntAct"/>
</dbReference>
<dbReference type="GO" id="GO:0034605">
    <property type="term" value="P:cellular response to heat"/>
    <property type="evidence" value="ECO:0007669"/>
    <property type="project" value="TreeGrafter"/>
</dbReference>
<dbReference type="GO" id="GO:0042026">
    <property type="term" value="P:protein refolding"/>
    <property type="evidence" value="ECO:0007669"/>
    <property type="project" value="InterPro"/>
</dbReference>
<dbReference type="CDD" id="cd00009">
    <property type="entry name" value="AAA"/>
    <property type="match status" value="1"/>
</dbReference>
<dbReference type="CDD" id="cd19499">
    <property type="entry name" value="RecA-like_ClpB_Hsp104-like"/>
    <property type="match status" value="1"/>
</dbReference>
<dbReference type="FunFam" id="1.10.8.60:FF:000017">
    <property type="entry name" value="ATP-dependent chaperone ClpB"/>
    <property type="match status" value="1"/>
</dbReference>
<dbReference type="FunFam" id="3.40.50.300:FF:000120">
    <property type="entry name" value="ATP-dependent chaperone ClpB"/>
    <property type="match status" value="1"/>
</dbReference>
<dbReference type="FunFam" id="3.40.50.300:FF:000025">
    <property type="entry name" value="ATP-dependent Clp protease subunit"/>
    <property type="match status" value="1"/>
</dbReference>
<dbReference type="FunFam" id="3.40.50.300:FF:000010">
    <property type="entry name" value="Chaperone clpB 1, putative"/>
    <property type="match status" value="1"/>
</dbReference>
<dbReference type="Gene3D" id="1.10.8.60">
    <property type="match status" value="1"/>
</dbReference>
<dbReference type="Gene3D" id="1.10.1780.10">
    <property type="entry name" value="Clp, N-terminal domain"/>
    <property type="match status" value="1"/>
</dbReference>
<dbReference type="Gene3D" id="3.40.50.300">
    <property type="entry name" value="P-loop containing nucleotide triphosphate hydrolases"/>
    <property type="match status" value="3"/>
</dbReference>
<dbReference type="InterPro" id="IPR003593">
    <property type="entry name" value="AAA+_ATPase"/>
</dbReference>
<dbReference type="InterPro" id="IPR003959">
    <property type="entry name" value="ATPase_AAA_core"/>
</dbReference>
<dbReference type="InterPro" id="IPR017730">
    <property type="entry name" value="Chaperonin_ClpB"/>
</dbReference>
<dbReference type="InterPro" id="IPR019489">
    <property type="entry name" value="Clp_ATPase_C"/>
</dbReference>
<dbReference type="InterPro" id="IPR036628">
    <property type="entry name" value="Clp_N_dom_sf"/>
</dbReference>
<dbReference type="InterPro" id="IPR004176">
    <property type="entry name" value="Clp_R_dom"/>
</dbReference>
<dbReference type="InterPro" id="IPR001270">
    <property type="entry name" value="ClpA/B"/>
</dbReference>
<dbReference type="InterPro" id="IPR018368">
    <property type="entry name" value="ClpA/B_CS1"/>
</dbReference>
<dbReference type="InterPro" id="IPR028299">
    <property type="entry name" value="ClpA/B_CS2"/>
</dbReference>
<dbReference type="InterPro" id="IPR041546">
    <property type="entry name" value="ClpA/ClpB_AAA_lid"/>
</dbReference>
<dbReference type="InterPro" id="IPR050130">
    <property type="entry name" value="ClpA_ClpB"/>
</dbReference>
<dbReference type="InterPro" id="IPR027417">
    <property type="entry name" value="P-loop_NTPase"/>
</dbReference>
<dbReference type="NCBIfam" id="TIGR03346">
    <property type="entry name" value="chaperone_ClpB"/>
    <property type="match status" value="1"/>
</dbReference>
<dbReference type="PANTHER" id="PTHR11638">
    <property type="entry name" value="ATP-DEPENDENT CLP PROTEASE"/>
    <property type="match status" value="1"/>
</dbReference>
<dbReference type="PANTHER" id="PTHR11638:SF18">
    <property type="entry name" value="HEAT SHOCK PROTEIN 104"/>
    <property type="match status" value="1"/>
</dbReference>
<dbReference type="Pfam" id="PF00004">
    <property type="entry name" value="AAA"/>
    <property type="match status" value="1"/>
</dbReference>
<dbReference type="Pfam" id="PF07724">
    <property type="entry name" value="AAA_2"/>
    <property type="match status" value="1"/>
</dbReference>
<dbReference type="Pfam" id="PF17871">
    <property type="entry name" value="AAA_lid_9"/>
    <property type="match status" value="1"/>
</dbReference>
<dbReference type="Pfam" id="PF02861">
    <property type="entry name" value="Clp_N"/>
    <property type="match status" value="2"/>
</dbReference>
<dbReference type="Pfam" id="PF10431">
    <property type="entry name" value="ClpB_D2-small"/>
    <property type="match status" value="1"/>
</dbReference>
<dbReference type="PRINTS" id="PR00300">
    <property type="entry name" value="CLPPROTEASEA"/>
</dbReference>
<dbReference type="SMART" id="SM00382">
    <property type="entry name" value="AAA"/>
    <property type="match status" value="2"/>
</dbReference>
<dbReference type="SMART" id="SM01086">
    <property type="entry name" value="ClpB_D2-small"/>
    <property type="match status" value="1"/>
</dbReference>
<dbReference type="SUPFAM" id="SSF81923">
    <property type="entry name" value="Double Clp-N motif"/>
    <property type="match status" value="1"/>
</dbReference>
<dbReference type="SUPFAM" id="SSF52540">
    <property type="entry name" value="P-loop containing nucleoside triphosphate hydrolases"/>
    <property type="match status" value="2"/>
</dbReference>
<dbReference type="PROSITE" id="PS51903">
    <property type="entry name" value="CLP_R"/>
    <property type="match status" value="1"/>
</dbReference>
<dbReference type="PROSITE" id="PS00870">
    <property type="entry name" value="CLPAB_1"/>
    <property type="match status" value="1"/>
</dbReference>
<dbReference type="PROSITE" id="PS00871">
    <property type="entry name" value="CLPAB_2"/>
    <property type="match status" value="1"/>
</dbReference>
<organism>
    <name type="scientific">Thermus thermophilus (strain ATCC 27634 / DSM 579 / HB8)</name>
    <dbReference type="NCBI Taxonomy" id="300852"/>
    <lineage>
        <taxon>Bacteria</taxon>
        <taxon>Thermotogati</taxon>
        <taxon>Deinococcota</taxon>
        <taxon>Deinococci</taxon>
        <taxon>Thermales</taxon>
        <taxon>Thermaceae</taxon>
        <taxon>Thermus</taxon>
    </lineage>
</organism>
<name>CLPB_THET8</name>
<evidence type="ECO:0000255" key="1">
    <source>
        <dbReference type="PROSITE-ProRule" id="PRU01251"/>
    </source>
</evidence>
<evidence type="ECO:0000269" key="2">
    <source>
    </source>
</evidence>
<evidence type="ECO:0000269" key="3">
    <source>
    </source>
</evidence>
<evidence type="ECO:0000269" key="4">
    <source>
    </source>
</evidence>
<evidence type="ECO:0000305" key="5"/>
<evidence type="ECO:0007829" key="6">
    <source>
        <dbReference type="PDB" id="1QVR"/>
    </source>
</evidence>
<evidence type="ECO:0007829" key="7">
    <source>
        <dbReference type="PDB" id="4FCV"/>
    </source>
</evidence>
<evidence type="ECO:0007829" key="8">
    <source>
        <dbReference type="PDB" id="4FCW"/>
    </source>
</evidence>
<evidence type="ECO:0007829" key="9">
    <source>
        <dbReference type="PDB" id="4HSE"/>
    </source>
</evidence>
<evidence type="ECO:0007829" key="10">
    <source>
        <dbReference type="PDB" id="4LJ4"/>
    </source>
</evidence>
<evidence type="ECO:0007829" key="11">
    <source>
        <dbReference type="PDB" id="4LJ5"/>
    </source>
</evidence>
<evidence type="ECO:0007829" key="12">
    <source>
        <dbReference type="PDB" id="4LJ7"/>
    </source>
</evidence>
<evidence type="ECO:0007829" key="13">
    <source>
        <dbReference type="PDB" id="4LJ9"/>
    </source>
</evidence>
<gene>
    <name type="primary">clpB</name>
    <name type="ordered locus">TTHA1487</name>
</gene>